<gene>
    <name type="primary">dec</name>
    <name type="ORF">ORF134</name>
</gene>
<dbReference type="EMBL" id="AY052766">
    <property type="protein sequence ID" value="AAL15522.1"/>
    <property type="molecule type" value="Genomic_DNA"/>
</dbReference>
<dbReference type="RefSeq" id="NP_720324.1">
    <property type="nucleotide sequence ID" value="NC_004348.1"/>
</dbReference>
<dbReference type="SMR" id="Q8HAE6"/>
<dbReference type="KEGG" id="vg:955842"/>
<dbReference type="OrthoDB" id="13371at10239"/>
<dbReference type="Proteomes" id="UP000001158">
    <property type="component" value="Segment"/>
</dbReference>
<dbReference type="GO" id="GO:0098021">
    <property type="term" value="C:viral capsid, decoration"/>
    <property type="evidence" value="ECO:0007669"/>
    <property type="project" value="UniProtKB-KW"/>
</dbReference>
<name>DECO_BPST6</name>
<comment type="function">
    <text evidence="1">May cover virion head capsid and play a role in capsid stabilization.</text>
</comment>
<comment type="subcellular location">
    <subcellularLocation>
        <location evidence="2">Virion</location>
    </subcellularLocation>
</comment>
<accession>Q8HAE6</accession>
<feature type="chain" id="PRO_0000419289" description="Decoration protein">
    <location>
        <begin position="1"/>
        <end position="134"/>
    </location>
</feature>
<reference key="1">
    <citation type="journal article" date="2003" name="J. Bacteriol.">
        <title>Genomic structure of the Salmonella enterica serovar typhimurium DT 64 bacteriophage ST64T: evidence for modular genetic architecture.</title>
        <authorList>
            <person name="Mmolawa P.T."/>
            <person name="Schmieger H."/>
            <person name="Tucker C.P."/>
            <person name="Heuzenroeder M.W."/>
        </authorList>
    </citation>
    <scope>NUCLEOTIDE SEQUENCE [GENOMIC DNA]</scope>
</reference>
<reference key="2">
    <citation type="journal article" date="2005" name="J. Bacteriol.">
        <title>Nucleotide sequence of the head assembly gene cluster of bacteriophage L and decoration protein characterization.</title>
        <authorList>
            <person name="Gilcrease E.B."/>
            <person name="Winn-Stapley D.A."/>
            <person name="Hewitt F.C."/>
            <person name="Joss L."/>
            <person name="Casjens S.R."/>
        </authorList>
    </citation>
    <scope>FUNCTION</scope>
</reference>
<sequence length="134" mass="14085">MANPNFTPSWPLYKDADGVYVSALPIKAIKYANDGSANAEFDGPYADQYMSAQTVAVFKPEVGGYLFRSQYGELLYMSKTAFEANYTSASGSVANAETADKLSTARTITLTGAVTGSASFDGSANVTIETTSGS</sequence>
<protein>
    <recommendedName>
        <fullName>Decoration protein</fullName>
        <shortName>Dec</shortName>
    </recommendedName>
</protein>
<evidence type="ECO:0000269" key="1">
    <source>
    </source>
</evidence>
<evidence type="ECO:0000305" key="2"/>
<organismHost>
    <name type="scientific">Salmonella typhimurium</name>
    <dbReference type="NCBI Taxonomy" id="90371"/>
</organismHost>
<keyword id="KW-1232">Capsid decoration protein</keyword>
<keyword id="KW-0167">Capsid protein</keyword>
<keyword id="KW-0426">Late protein</keyword>
<keyword id="KW-1185">Reference proteome</keyword>
<keyword id="KW-0946">Virion</keyword>
<organism>
    <name type="scientific">Salmonella phage ST64T</name>
    <name type="common">Bacteriophage ST64T</name>
    <dbReference type="NCBI Taxonomy" id="173443"/>
    <lineage>
        <taxon>Viruses</taxon>
        <taxon>Duplodnaviria</taxon>
        <taxon>Heunggongvirae</taxon>
        <taxon>Uroviricota</taxon>
        <taxon>Caudoviricetes</taxon>
        <taxon>Lederbergvirus</taxon>
    </lineage>
</organism>
<proteinExistence type="predicted"/>